<feature type="chain" id="PRO_0000290091" description="DNA-directed RNA polymerase subunit alpha">
    <location>
        <begin position="1"/>
        <end position="337"/>
    </location>
</feature>
<feature type="region of interest" description="Alpha N-terminal domain (alpha-NTD)" evidence="1">
    <location>
        <begin position="1"/>
        <end position="233"/>
    </location>
</feature>
<feature type="region of interest" description="Alpha C-terminal domain (alpha-CTD)" evidence="1">
    <location>
        <begin position="264"/>
        <end position="337"/>
    </location>
</feature>
<keyword id="KW-0150">Chloroplast</keyword>
<keyword id="KW-0240">DNA-directed RNA polymerase</keyword>
<keyword id="KW-0548">Nucleotidyltransferase</keyword>
<keyword id="KW-0934">Plastid</keyword>
<keyword id="KW-1185">Reference proteome</keyword>
<keyword id="KW-0804">Transcription</keyword>
<keyword id="KW-0808">Transferase</keyword>
<reference key="1">
    <citation type="journal article" date="2004" name="Plant Physiol.">
        <title>A comparison of rice chloroplast genomes.</title>
        <authorList>
            <person name="Tang J."/>
            <person name="Xia H."/>
            <person name="Cao M."/>
            <person name="Zhang X."/>
            <person name="Zeng W."/>
            <person name="Hu S."/>
            <person name="Tong W."/>
            <person name="Wang J."/>
            <person name="Wang J."/>
            <person name="Yu J."/>
            <person name="Yang H."/>
            <person name="Zhu L."/>
        </authorList>
    </citation>
    <scope>NUCLEOTIDE SEQUENCE [LARGE SCALE GENOMIC DNA]</scope>
    <source>
        <strain>cv. 93-11</strain>
    </source>
</reference>
<organism>
    <name type="scientific">Oryza sativa subsp. indica</name>
    <name type="common">Rice</name>
    <dbReference type="NCBI Taxonomy" id="39946"/>
    <lineage>
        <taxon>Eukaryota</taxon>
        <taxon>Viridiplantae</taxon>
        <taxon>Streptophyta</taxon>
        <taxon>Embryophyta</taxon>
        <taxon>Tracheophyta</taxon>
        <taxon>Spermatophyta</taxon>
        <taxon>Magnoliopsida</taxon>
        <taxon>Liliopsida</taxon>
        <taxon>Poales</taxon>
        <taxon>Poaceae</taxon>
        <taxon>BOP clade</taxon>
        <taxon>Oryzoideae</taxon>
        <taxon>Oryzeae</taxon>
        <taxon>Oryzinae</taxon>
        <taxon>Oryza</taxon>
        <taxon>Oryza sativa</taxon>
    </lineage>
</organism>
<proteinExistence type="inferred from homology"/>
<dbReference type="EC" id="2.7.7.6" evidence="1"/>
<dbReference type="EMBL" id="AY522329">
    <property type="protein sequence ID" value="AAS46075.1"/>
    <property type="molecule type" value="Genomic_DNA"/>
</dbReference>
<dbReference type="RefSeq" id="YP_009161395.1">
    <property type="nucleotide sequence ID" value="NC_027678.1"/>
</dbReference>
<dbReference type="RefSeq" id="YP_654235.1">
    <property type="nucleotide sequence ID" value="NC_008155.1"/>
</dbReference>
<dbReference type="SMR" id="P0C499"/>
<dbReference type="STRING" id="39946.P0C499"/>
<dbReference type="GeneID" id="4126898"/>
<dbReference type="Proteomes" id="UP000007015">
    <property type="component" value="Chloroplast"/>
</dbReference>
<dbReference type="GO" id="GO:0009507">
    <property type="term" value="C:chloroplast"/>
    <property type="evidence" value="ECO:0007669"/>
    <property type="project" value="UniProtKB-SubCell"/>
</dbReference>
<dbReference type="GO" id="GO:0000428">
    <property type="term" value="C:DNA-directed RNA polymerase complex"/>
    <property type="evidence" value="ECO:0007669"/>
    <property type="project" value="UniProtKB-KW"/>
</dbReference>
<dbReference type="GO" id="GO:0005739">
    <property type="term" value="C:mitochondrion"/>
    <property type="evidence" value="ECO:0007669"/>
    <property type="project" value="GOC"/>
</dbReference>
<dbReference type="GO" id="GO:0009536">
    <property type="term" value="C:plastid"/>
    <property type="evidence" value="ECO:0000305"/>
    <property type="project" value="Gramene"/>
</dbReference>
<dbReference type="GO" id="GO:0003677">
    <property type="term" value="F:DNA binding"/>
    <property type="evidence" value="ECO:0007669"/>
    <property type="project" value="UniProtKB-UniRule"/>
</dbReference>
<dbReference type="GO" id="GO:0003899">
    <property type="term" value="F:DNA-directed RNA polymerase activity"/>
    <property type="evidence" value="ECO:0007669"/>
    <property type="project" value="UniProtKB-UniRule"/>
</dbReference>
<dbReference type="GO" id="GO:0046983">
    <property type="term" value="F:protein dimerization activity"/>
    <property type="evidence" value="ECO:0007669"/>
    <property type="project" value="InterPro"/>
</dbReference>
<dbReference type="GO" id="GO:0006351">
    <property type="term" value="P:DNA-templated transcription"/>
    <property type="evidence" value="ECO:0007669"/>
    <property type="project" value="UniProtKB-UniRule"/>
</dbReference>
<dbReference type="CDD" id="cd06928">
    <property type="entry name" value="RNAP_alpha_NTD"/>
    <property type="match status" value="1"/>
</dbReference>
<dbReference type="FunFam" id="1.10.150.20:FF:000021">
    <property type="entry name" value="DNA-directed RNA polymerase subunit alpha"/>
    <property type="match status" value="1"/>
</dbReference>
<dbReference type="FunFam" id="2.170.120.12:FF:000001">
    <property type="entry name" value="DNA-directed RNA polymerase subunit alpha"/>
    <property type="match status" value="1"/>
</dbReference>
<dbReference type="Gene3D" id="1.10.150.20">
    <property type="entry name" value="5' to 3' exonuclease, C-terminal subdomain"/>
    <property type="match status" value="1"/>
</dbReference>
<dbReference type="Gene3D" id="2.170.120.12">
    <property type="entry name" value="DNA-directed RNA polymerase, insert domain"/>
    <property type="match status" value="1"/>
</dbReference>
<dbReference type="Gene3D" id="3.30.1360.10">
    <property type="entry name" value="RNA polymerase, RBP11-like subunit"/>
    <property type="match status" value="1"/>
</dbReference>
<dbReference type="HAMAP" id="MF_00059">
    <property type="entry name" value="RNApol_bact_RpoA"/>
    <property type="match status" value="1"/>
</dbReference>
<dbReference type="InterPro" id="IPR011262">
    <property type="entry name" value="DNA-dir_RNA_pol_insert"/>
</dbReference>
<dbReference type="InterPro" id="IPR011263">
    <property type="entry name" value="DNA-dir_RNA_pol_RpoA/D/Rpb3"/>
</dbReference>
<dbReference type="InterPro" id="IPR011773">
    <property type="entry name" value="DNA-dir_RpoA"/>
</dbReference>
<dbReference type="InterPro" id="IPR036603">
    <property type="entry name" value="RBP11-like"/>
</dbReference>
<dbReference type="InterPro" id="IPR011260">
    <property type="entry name" value="RNAP_asu_C"/>
</dbReference>
<dbReference type="InterPro" id="IPR036643">
    <property type="entry name" value="RNApol_insert_sf"/>
</dbReference>
<dbReference type="NCBIfam" id="TIGR02027">
    <property type="entry name" value="rpoA"/>
    <property type="match status" value="1"/>
</dbReference>
<dbReference type="Pfam" id="PF01000">
    <property type="entry name" value="RNA_pol_A_bac"/>
    <property type="match status" value="1"/>
</dbReference>
<dbReference type="Pfam" id="PF03118">
    <property type="entry name" value="RNA_pol_A_CTD"/>
    <property type="match status" value="1"/>
</dbReference>
<dbReference type="Pfam" id="PF01193">
    <property type="entry name" value="RNA_pol_L"/>
    <property type="match status" value="1"/>
</dbReference>
<dbReference type="SMART" id="SM00662">
    <property type="entry name" value="RPOLD"/>
    <property type="match status" value="1"/>
</dbReference>
<dbReference type="SUPFAM" id="SSF47789">
    <property type="entry name" value="C-terminal domain of RNA polymerase alpha subunit"/>
    <property type="match status" value="1"/>
</dbReference>
<dbReference type="SUPFAM" id="SSF56553">
    <property type="entry name" value="Insert subdomain of RNA polymerase alpha subunit"/>
    <property type="match status" value="1"/>
</dbReference>
<dbReference type="SUPFAM" id="SSF55257">
    <property type="entry name" value="RBP11-like subunits of RNA polymerase"/>
    <property type="match status" value="1"/>
</dbReference>
<gene>
    <name evidence="1" type="primary">rpoA</name>
    <name type="ORF">9311099</name>
</gene>
<comment type="function">
    <text evidence="1">DNA-dependent RNA polymerase catalyzes the transcription of DNA into RNA using the four ribonucleoside triphosphates as substrates.</text>
</comment>
<comment type="catalytic activity">
    <reaction evidence="1">
        <text>RNA(n) + a ribonucleoside 5'-triphosphate = RNA(n+1) + diphosphate</text>
        <dbReference type="Rhea" id="RHEA:21248"/>
        <dbReference type="Rhea" id="RHEA-COMP:14527"/>
        <dbReference type="Rhea" id="RHEA-COMP:17342"/>
        <dbReference type="ChEBI" id="CHEBI:33019"/>
        <dbReference type="ChEBI" id="CHEBI:61557"/>
        <dbReference type="ChEBI" id="CHEBI:140395"/>
        <dbReference type="EC" id="2.7.7.6"/>
    </reaction>
</comment>
<comment type="subunit">
    <text evidence="1">In plastids the minimal PEP RNA polymerase catalytic core is composed of four subunits: alpha, beta, beta', and beta''. When a (nuclear-encoded) sigma factor is associated with the core the holoenzyme is formed, which can initiate transcription.</text>
</comment>
<comment type="subcellular location">
    <subcellularLocation>
        <location>Plastid</location>
        <location>Chloroplast</location>
    </subcellularLocation>
</comment>
<comment type="domain">
    <text evidence="1">The N-terminal domain is essential for RNAP assembly and basal transcription, whereas the C-terminal domain is involved in interaction with transcriptional regulators and with upstream promoter elements.</text>
</comment>
<comment type="similarity">
    <text evidence="1">Belongs to the RNA polymerase alpha chain family.</text>
</comment>
<geneLocation type="chloroplast"/>
<name>RPOA_ORYSI</name>
<protein>
    <recommendedName>
        <fullName evidence="1">DNA-directed RNA polymerase subunit alpha</fullName>
        <shortName evidence="1">PEP</shortName>
        <ecNumber evidence="1">2.7.7.6</ecNumber>
    </recommendedName>
    <alternativeName>
        <fullName evidence="1">Plastid-encoded RNA polymerase subunit alpha</fullName>
        <shortName evidence="1">RNA polymerase subunit alpha</shortName>
    </alternativeName>
</protein>
<evidence type="ECO:0000255" key="1">
    <source>
        <dbReference type="HAMAP-Rule" id="MF_00059"/>
    </source>
</evidence>
<sequence length="337" mass="38667">MVREEVAGSTQTLQWKCVESRVDSKRLYYGRFILSPLRKGQADTVGIALRRALLGETEGTCITHAKFGSVPHEYSTIAGIEESVQEILLNLKEIVLRSNLYGVRTASICVKGPRYITAQDIILPPSVEIVDTAQPIANLTEPTDFRIELRIKRDRGYHTEVRKNTQDGSYPIDAVSMPVRNVNYSIFACGNGNAKYEILFLEIWTNGSLTPKEALYEASRNLIDLFLPFLHTEEEGTRFQENKNRFTSPLLSFQKRLTNLKKNKKRIPLNCIFIDQLELPSRTYNCLKRANIHTLLDLLSKTEEDLMRIDSFRMQDGKQIWDTLEKHLPMDLPKNKF</sequence>
<accession>P0C499</accession>
<accession>P12090</accession>
<accession>Q6QY54</accession>
<accession>Q6Z507</accession>